<evidence type="ECO:0000255" key="1">
    <source>
        <dbReference type="HAMAP-Rule" id="MF_01586"/>
    </source>
</evidence>
<name>FEOC_SALPA</name>
<reference key="1">
    <citation type="journal article" date="2004" name="Nat. Genet.">
        <title>Comparison of genome degradation in Paratyphi A and Typhi, human-restricted serovars of Salmonella enterica that cause typhoid.</title>
        <authorList>
            <person name="McClelland M."/>
            <person name="Sanderson K.E."/>
            <person name="Clifton S.W."/>
            <person name="Latreille P."/>
            <person name="Porwollik S."/>
            <person name="Sabo A."/>
            <person name="Meyer R."/>
            <person name="Bieri T."/>
            <person name="Ozersky P."/>
            <person name="McLellan M."/>
            <person name="Harkins C.R."/>
            <person name="Wang C."/>
            <person name="Nguyen C."/>
            <person name="Berghoff A."/>
            <person name="Elliott G."/>
            <person name="Kohlberg S."/>
            <person name="Strong C."/>
            <person name="Du F."/>
            <person name="Carter J."/>
            <person name="Kremizki C."/>
            <person name="Layman D."/>
            <person name="Leonard S."/>
            <person name="Sun H."/>
            <person name="Fulton L."/>
            <person name="Nash W."/>
            <person name="Miner T."/>
            <person name="Minx P."/>
            <person name="Delehaunty K."/>
            <person name="Fronick C."/>
            <person name="Magrini V."/>
            <person name="Nhan M."/>
            <person name="Warren W."/>
            <person name="Florea L."/>
            <person name="Spieth J."/>
            <person name="Wilson R.K."/>
        </authorList>
    </citation>
    <scope>NUCLEOTIDE SEQUENCE [LARGE SCALE GENOMIC DNA]</scope>
    <source>
        <strain>ATCC 9150 / SARB42</strain>
    </source>
</reference>
<dbReference type="EMBL" id="CP000026">
    <property type="protein sequence ID" value="AAV79185.1"/>
    <property type="molecule type" value="Genomic_DNA"/>
</dbReference>
<dbReference type="RefSeq" id="WP_000157589.1">
    <property type="nucleotide sequence ID" value="NC_006511.1"/>
</dbReference>
<dbReference type="SMR" id="Q5PLZ0"/>
<dbReference type="KEGG" id="spt:SPA3372"/>
<dbReference type="HOGENOM" id="CLU_189182_0_0_6"/>
<dbReference type="Proteomes" id="UP000008185">
    <property type="component" value="Chromosome"/>
</dbReference>
<dbReference type="GO" id="GO:0003677">
    <property type="term" value="F:DNA binding"/>
    <property type="evidence" value="ECO:0007669"/>
    <property type="project" value="UniProtKB-KW"/>
</dbReference>
<dbReference type="GO" id="GO:0005506">
    <property type="term" value="F:iron ion binding"/>
    <property type="evidence" value="ECO:0007669"/>
    <property type="project" value="UniProtKB-UniRule"/>
</dbReference>
<dbReference type="GO" id="GO:0051536">
    <property type="term" value="F:iron-sulfur cluster binding"/>
    <property type="evidence" value="ECO:0007669"/>
    <property type="project" value="UniProtKB-KW"/>
</dbReference>
<dbReference type="Gene3D" id="1.10.10.10">
    <property type="entry name" value="Winged helix-like DNA-binding domain superfamily/Winged helix DNA-binding domain"/>
    <property type="match status" value="1"/>
</dbReference>
<dbReference type="HAMAP" id="MF_01586">
    <property type="entry name" value="FeoC"/>
    <property type="match status" value="1"/>
</dbReference>
<dbReference type="InterPro" id="IPR023732">
    <property type="entry name" value="FeoC"/>
</dbReference>
<dbReference type="InterPro" id="IPR015102">
    <property type="entry name" value="Tscrpt_reg_HTH_FeoC"/>
</dbReference>
<dbReference type="InterPro" id="IPR036388">
    <property type="entry name" value="WH-like_DNA-bd_sf"/>
</dbReference>
<dbReference type="InterPro" id="IPR036390">
    <property type="entry name" value="WH_DNA-bd_sf"/>
</dbReference>
<dbReference type="NCBIfam" id="NF011960">
    <property type="entry name" value="PRK15431.1"/>
    <property type="match status" value="1"/>
</dbReference>
<dbReference type="Pfam" id="PF09012">
    <property type="entry name" value="FeoC"/>
    <property type="match status" value="1"/>
</dbReference>
<dbReference type="SUPFAM" id="SSF46785">
    <property type="entry name" value="Winged helix' DNA-binding domain"/>
    <property type="match status" value="1"/>
</dbReference>
<gene>
    <name evidence="1" type="primary">feoC</name>
    <name type="ordered locus">SPA3372</name>
</gene>
<organism>
    <name type="scientific">Salmonella paratyphi A (strain ATCC 9150 / SARB42)</name>
    <dbReference type="NCBI Taxonomy" id="295319"/>
    <lineage>
        <taxon>Bacteria</taxon>
        <taxon>Pseudomonadati</taxon>
        <taxon>Pseudomonadota</taxon>
        <taxon>Gammaproteobacteria</taxon>
        <taxon>Enterobacterales</taxon>
        <taxon>Enterobacteriaceae</taxon>
        <taxon>Salmonella</taxon>
    </lineage>
</organism>
<sequence length="78" mass="8674">MASLIQVRDLLALRGRMEATQISHTLHAPQPMIDAMLNQLEIMGKAVRIPEEPDGCLSGSCKSCPEGKACLREWWALR</sequence>
<protein>
    <recommendedName>
        <fullName evidence="1">Probable [Fe-S]-dependent transcriptional repressor</fullName>
    </recommendedName>
</protein>
<proteinExistence type="inferred from homology"/>
<feature type="chain" id="PRO_0000313064" description="Probable [Fe-S]-dependent transcriptional repressor">
    <location>
        <begin position="1"/>
        <end position="78"/>
    </location>
</feature>
<feature type="binding site" evidence="1">
    <location>
        <position position="56"/>
    </location>
    <ligand>
        <name>iron-sulfur cluster</name>
        <dbReference type="ChEBI" id="CHEBI:30408"/>
    </ligand>
</feature>
<feature type="binding site" evidence="1">
    <location>
        <position position="61"/>
    </location>
    <ligand>
        <name>iron-sulfur cluster</name>
        <dbReference type="ChEBI" id="CHEBI:30408"/>
    </ligand>
</feature>
<feature type="binding site" evidence="1">
    <location>
        <position position="64"/>
    </location>
    <ligand>
        <name>iron-sulfur cluster</name>
        <dbReference type="ChEBI" id="CHEBI:30408"/>
    </ligand>
</feature>
<feature type="binding site" evidence="1">
    <location>
        <position position="70"/>
    </location>
    <ligand>
        <name>iron-sulfur cluster</name>
        <dbReference type="ChEBI" id="CHEBI:30408"/>
    </ligand>
</feature>
<keyword id="KW-0238">DNA-binding</keyword>
<keyword id="KW-0408">Iron</keyword>
<keyword id="KW-0411">Iron-sulfur</keyword>
<keyword id="KW-0479">Metal-binding</keyword>
<keyword id="KW-0678">Repressor</keyword>
<keyword id="KW-0804">Transcription</keyword>
<keyword id="KW-0805">Transcription regulation</keyword>
<comment type="function">
    <text evidence="1">May function as a transcriptional regulator that controls feoABC expression.</text>
</comment>
<comment type="similarity">
    <text evidence="1">Belongs to the FeoC family.</text>
</comment>
<accession>Q5PLZ0</accession>